<accession>P18478</accession>
<evidence type="ECO:0000250" key="1"/>
<evidence type="ECO:0000250" key="2">
    <source>
        <dbReference type="UniProtKB" id="P04517"/>
    </source>
</evidence>
<evidence type="ECO:0000255" key="3">
    <source>
        <dbReference type="PROSITE-ProRule" id="PRU00539"/>
    </source>
</evidence>
<evidence type="ECO:0000255" key="4">
    <source>
        <dbReference type="PROSITE-ProRule" id="PRU00766"/>
    </source>
</evidence>
<evidence type="ECO:0000256" key="5">
    <source>
        <dbReference type="SAM" id="MobiDB-lite"/>
    </source>
</evidence>
<evidence type="ECO:0000305" key="6"/>
<dbReference type="EC" id="3.4.22.44"/>
<dbReference type="EC" id="2.7.7.48"/>
<dbReference type="EMBL" id="D13913">
    <property type="protein sequence ID" value="BAA03009.2"/>
    <property type="molecule type" value="Genomic_RNA"/>
</dbReference>
<dbReference type="PIR" id="JQ0498">
    <property type="entry name" value="JQ0498"/>
</dbReference>
<dbReference type="GO" id="GO:0019028">
    <property type="term" value="C:viral capsid"/>
    <property type="evidence" value="ECO:0007669"/>
    <property type="project" value="UniProtKB-KW"/>
</dbReference>
<dbReference type="GO" id="GO:0008234">
    <property type="term" value="F:cysteine-type peptidase activity"/>
    <property type="evidence" value="ECO:0007669"/>
    <property type="project" value="UniProtKB-KW"/>
</dbReference>
<dbReference type="GO" id="GO:0000166">
    <property type="term" value="F:nucleotide binding"/>
    <property type="evidence" value="ECO:0007669"/>
    <property type="project" value="UniProtKB-KW"/>
</dbReference>
<dbReference type="GO" id="GO:0003723">
    <property type="term" value="F:RNA binding"/>
    <property type="evidence" value="ECO:0007669"/>
    <property type="project" value="InterPro"/>
</dbReference>
<dbReference type="GO" id="GO:0003968">
    <property type="term" value="F:RNA-directed RNA polymerase activity"/>
    <property type="evidence" value="ECO:0007669"/>
    <property type="project" value="UniProtKB-KW"/>
</dbReference>
<dbReference type="GO" id="GO:0006351">
    <property type="term" value="P:DNA-templated transcription"/>
    <property type="evidence" value="ECO:0007669"/>
    <property type="project" value="InterPro"/>
</dbReference>
<dbReference type="GO" id="GO:0006508">
    <property type="term" value="P:proteolysis"/>
    <property type="evidence" value="ECO:0007669"/>
    <property type="project" value="UniProtKB-KW"/>
</dbReference>
<dbReference type="GO" id="GO:0039694">
    <property type="term" value="P:viral RNA genome replication"/>
    <property type="evidence" value="ECO:0007669"/>
    <property type="project" value="InterPro"/>
</dbReference>
<dbReference type="CDD" id="cd23175">
    <property type="entry name" value="ps-ssRNAv_Potyviridae_RdRp"/>
    <property type="match status" value="1"/>
</dbReference>
<dbReference type="Gene3D" id="3.30.70.270">
    <property type="match status" value="1"/>
</dbReference>
<dbReference type="Gene3D" id="2.40.10.10">
    <property type="entry name" value="Trypsin-like serine proteases"/>
    <property type="match status" value="1"/>
</dbReference>
<dbReference type="InterPro" id="IPR043502">
    <property type="entry name" value="DNA/RNA_pol_sf"/>
</dbReference>
<dbReference type="InterPro" id="IPR009003">
    <property type="entry name" value="Peptidase_S1_PA"/>
</dbReference>
<dbReference type="InterPro" id="IPR043504">
    <property type="entry name" value="Peptidase_S1_PA_chymotrypsin"/>
</dbReference>
<dbReference type="InterPro" id="IPR001592">
    <property type="entry name" value="Poty_coat"/>
</dbReference>
<dbReference type="InterPro" id="IPR001730">
    <property type="entry name" value="Potyv_NIa-pro_dom"/>
</dbReference>
<dbReference type="InterPro" id="IPR043128">
    <property type="entry name" value="Rev_trsase/Diguanyl_cyclase"/>
</dbReference>
<dbReference type="InterPro" id="IPR001205">
    <property type="entry name" value="RNA-dir_pol_C"/>
</dbReference>
<dbReference type="InterPro" id="IPR007094">
    <property type="entry name" value="RNA-dir_pol_PSvirus"/>
</dbReference>
<dbReference type="Pfam" id="PF00863">
    <property type="entry name" value="Peptidase_C4"/>
    <property type="match status" value="1"/>
</dbReference>
<dbReference type="Pfam" id="PF00767">
    <property type="entry name" value="Poty_coat"/>
    <property type="match status" value="1"/>
</dbReference>
<dbReference type="Pfam" id="PF00680">
    <property type="entry name" value="RdRP_1"/>
    <property type="match status" value="1"/>
</dbReference>
<dbReference type="PRINTS" id="PR00966">
    <property type="entry name" value="NIAPOTYPTASE"/>
</dbReference>
<dbReference type="SUPFAM" id="SSF56672">
    <property type="entry name" value="DNA/RNA polymerases"/>
    <property type="match status" value="1"/>
</dbReference>
<dbReference type="SUPFAM" id="SSF50494">
    <property type="entry name" value="Trypsin-like serine proteases"/>
    <property type="match status" value="1"/>
</dbReference>
<dbReference type="PROSITE" id="PS51436">
    <property type="entry name" value="POTYVIRUS_NIA_PRO"/>
    <property type="match status" value="1"/>
</dbReference>
<dbReference type="PROSITE" id="PS50507">
    <property type="entry name" value="RDRP_SSRNA_POS"/>
    <property type="match status" value="1"/>
</dbReference>
<organism>
    <name type="scientific">Watermelon mosaic virus II (isolate USA)</name>
    <dbReference type="NCBI Taxonomy" id="148360"/>
    <lineage>
        <taxon>Viruses</taxon>
        <taxon>Riboviria</taxon>
        <taxon>Orthornavirae</taxon>
        <taxon>Pisuviricota</taxon>
        <taxon>Stelpaviricetes</taxon>
        <taxon>Patatavirales</taxon>
        <taxon>Potyviridae</taxon>
        <taxon>Potyvirus</taxon>
        <taxon>Potyvirus citrulli</taxon>
        <taxon>Watermelon mosaic virus</taxon>
    </lineage>
</organism>
<name>POLG_WMV2U</name>
<keyword id="KW-0167">Capsid protein</keyword>
<keyword id="KW-0308">Genetically modified food</keyword>
<keyword id="KW-0378">Hydrolase</keyword>
<keyword id="KW-0547">Nucleotide-binding</keyword>
<keyword id="KW-0548">Nucleotidyltransferase</keyword>
<keyword id="KW-0645">Protease</keyword>
<keyword id="KW-0696">RNA-directed RNA polymerase</keyword>
<keyword id="KW-0788">Thiol protease</keyword>
<keyword id="KW-0808">Transferase</keyword>
<keyword id="KW-0693">Viral RNA replication</keyword>
<keyword id="KW-0946">Virion</keyword>
<organismHost>
    <name type="scientific">Citrullus lanatus</name>
    <name type="common">Watermelon</name>
    <name type="synonym">Citrullus vulgaris</name>
    <dbReference type="NCBI Taxonomy" id="3654"/>
</organismHost>
<organismHost>
    <name type="scientific">Cucumis melo</name>
    <name type="common">Muskmelon</name>
    <dbReference type="NCBI Taxonomy" id="3656"/>
</organismHost>
<organismHost>
    <name type="scientific">Cucumis sativus</name>
    <name type="common">Cucumber</name>
    <dbReference type="NCBI Taxonomy" id="3659"/>
</organismHost>
<organismHost>
    <name type="scientific">Cucurbita pepo</name>
    <name type="common">Vegetable marrow</name>
    <name type="synonym">Summer squash</name>
    <dbReference type="NCBI Taxonomy" id="3663"/>
</organismHost>
<proteinExistence type="evidence at protein level"/>
<comment type="function">
    <molecule>Nuclear inclusion protein A</molecule>
    <text evidence="2">Has RNA-binding and proteolytic activities.</text>
</comment>
<comment type="function">
    <molecule>Nuclear inclusion protein B</molecule>
    <text>An RNA-dependent RNA polymerase that plays an essential role in the virus replication.</text>
</comment>
<comment type="function">
    <molecule>Capsid protein</molecule>
    <text evidence="2">Involved in aphid transmission, cell-to-cell and systemis movement, encapsidation of the viral RNA and in the regulation of viral RNA amplification.</text>
</comment>
<comment type="catalytic activity">
    <reaction evidence="2">
        <text>Hydrolyzes glutaminyl bonds, and activity is further restricted by preferences for the amino acids in P6 - P1' that vary with the species of potyvirus, e.g. Glu-Xaa-Xaa-Tyr-Xaa-Gln-|-(Ser or Gly) for the enzyme from tobacco etch virus. The natural substrate is the viral polyprotein, but other proteins and oligopeptides containing the appropriate consensus sequence are also cleaved.</text>
        <dbReference type="EC" id="3.4.22.44"/>
    </reaction>
</comment>
<comment type="catalytic activity">
    <reaction evidence="3">
        <text>RNA(n) + a ribonucleoside 5'-triphosphate = RNA(n+1) + diphosphate</text>
        <dbReference type="Rhea" id="RHEA:21248"/>
        <dbReference type="Rhea" id="RHEA-COMP:14527"/>
        <dbReference type="Rhea" id="RHEA-COMP:17342"/>
        <dbReference type="ChEBI" id="CHEBI:33019"/>
        <dbReference type="ChEBI" id="CHEBI:61557"/>
        <dbReference type="ChEBI" id="CHEBI:140395"/>
        <dbReference type="EC" id="2.7.7.48"/>
    </reaction>
</comment>
<comment type="subcellular location">
    <molecule>Capsid protein</molecule>
    <subcellularLocation>
        <location evidence="6">Virion</location>
    </subcellularLocation>
</comment>
<comment type="PTM">
    <text evidence="1">Genome polyprotein of potyviruses undergoes post-translational proteolytic processing by the main proteinase NIa-pro resulting in the production of at least ten individual proteins. The P1 proteinase and the HC-pro cleave only their respective C-termini autocatalytically. 6K1 is essential for proper proteolytic separation of P3 from CI (By similarity).</text>
</comment>
<comment type="biotechnology">
    <text>The gene for the coat protein is introduced by genetic manipulation and expressed in squash so as to obtain virus resistant plants.</text>
</comment>
<comment type="miscellaneous">
    <text>Readthrough of a terminator codon TGA occurs between codons for Ala-267 and Gln-269.</text>
</comment>
<comment type="similarity">
    <text evidence="6">Belongs to the potyviridae genome polyprotein family.</text>
</comment>
<reference key="1">
    <citation type="submission" date="1992-12" db="EMBL/GenBank/DDBJ databases">
        <authorList>
            <person name="Slightom J.L."/>
        </authorList>
    </citation>
    <scope>NUCLEOTIDE SEQUENCE [GENOMIC RNA]</scope>
</reference>
<reference key="2">
    <citation type="journal article" date="1990" name="J. Gen. Virol.">
        <title>Watermelon mosaic virus II and zucchini yellow mosaic virus: cloning of 3'-terminal regions, nucleotide sequences, and phylogenetic comparisons.</title>
        <authorList>
            <person name="Quemada H."/>
            <person name="Sieu L.C."/>
            <person name="Siemieniak D.R."/>
            <person name="Gonsalves D."/>
            <person name="Slightom J.L."/>
        </authorList>
    </citation>
    <scope>NUCLEOTIDE SEQUENCE [GENOMIC RNA] OF 736-1016</scope>
</reference>
<reference key="3">
    <citation type="journal article" date="2001" name="Virus Res.">
        <title>Potyvirus proteins: a wealth of functions.</title>
        <authorList>
            <person name="Urcuqui-Inchima S."/>
            <person name="Haenni A.L."/>
            <person name="Bernardi F."/>
        </authorList>
    </citation>
    <scope>REVIEW</scope>
</reference>
<protein>
    <recommendedName>
        <fullName>Genome polyprotein</fullName>
    </recommendedName>
    <component>
        <recommendedName>
            <fullName>Nuclear inclusion protein A</fullName>
            <shortName>NI-A</shortName>
            <shortName>NIA</shortName>
            <ecNumber>3.4.22.44</ecNumber>
        </recommendedName>
        <alternativeName>
            <fullName>49 kDa proteinase</fullName>
            <shortName>49 kDa-Pro</shortName>
        </alternativeName>
    </component>
    <component>
        <recommendedName>
            <fullName>Nuclear inclusion protein B</fullName>
            <shortName>NI-B</shortName>
            <shortName>NIB</shortName>
            <ecNumber>2.7.7.48</ecNumber>
        </recommendedName>
        <alternativeName>
            <fullName>RNA-directed RNA polymerase</fullName>
        </alternativeName>
    </component>
    <component>
        <recommendedName>
            <fullName>Capsid protein</fullName>
            <shortName>CP</shortName>
        </recommendedName>
        <alternativeName>
            <fullName>Coat protein</fullName>
        </alternativeName>
    </component>
</protein>
<sequence length="1017" mass="115489">LSVTRKQCLELGMVLSLSPMGTYLEGTMGCLQLKHGHGGFVIHNTTQLRIHFIQGKDAILIRMPKIFLRLQSATSLDNQNVRNEFAWLEQTFKRRAYGQQSQSSSIILPEGKGSFWIHWITTQDGFCGLPLVSVNDGHVVGIHGLTSNDSEKNFFVPFTDGFEKEYLDNADNLSWDKHWFWEPSKIAWGPLNLVEEQPKEEFKISKLVSDLFGNTVAVQSRKERWVLDAMEGNLVACGQADSALVTKHVVKGKCPYFAQYLSLHDGAXQFFEPLMGAYQPSRLNKDAFKKDFFKYNKPVVLNEVDFNAFEKAVEGVITMMVDFEFAECLFVTDPDEIYGSLNMKAAVGAQYKGKKQDYFSGMDSFDKERLLYLSCERLFNGEKGIWNGSLKAELRPIEKVQANKTRTFTAAPLDTLLGAKVCVDDFNNQFYSFNLKCPWTVGMTKFYGGWDKLMRSLPDGWTYCHADGSQFDSSLTPLLLNAVLSIRCCFMEDWWVGREMLENLYAEIVYTPILAPDGTIFKKFRGNNSGQPSTVVDNTLMVVIAMYYSCCKQGWSEEDIERRLVFFANGDDIILAVKDEDVWLYDTLSASFAELGLNYNFDERTKKREELWFMSHQAMLVDGIYIPKLEPERIVSILEWDRSKELMHRTEAICAAMIEAWGYTELLQEIRKFYLWLLSKDEFKELAASGKAPYIAETALRKLYTDVNTQPSELQRYLEVLDFNHIDGCCESVSLQSGKETVENLDAGKESKKDASDKGNKPQNSQVGQGSKEPTKTGTVSKDVNVGSKGKEVPRLQKITKKMNLPTVGGKIILSLDHLLEYKPSQVDLFNTRATKTQFESWYSAVKVEYDLNDEQMGVIMNGFMVWCIDNGTSPDVNGVWVMMDGEEQVEYPLKPIVENAKPTLRQIMHHFSDAAEAYIEMRNSESPYMPRYGLLRNLRDRELARYAFDFYEVTSKTPNRAREAIAQMKAAALAGVNSRLFGLDGNISTNSENTGRHTARDVNQNMHTLLGMGPPQ</sequence>
<feature type="chain" id="PRO_0000040497" description="Nuclear inclusion protein A" evidence="1">
    <location>
        <begin position="1" status="less than"/>
        <end position="219"/>
    </location>
</feature>
<feature type="chain" id="PRO_0000420034" description="Genome polyprotein">
    <location>
        <begin position="1"/>
        <end position="1017"/>
    </location>
</feature>
<feature type="chain" id="PRO_0000040498" description="Nuclear inclusion protein B" evidence="1">
    <location>
        <begin position="220"/>
        <end position="736"/>
    </location>
</feature>
<feature type="chain" id="PRO_0000040499" description="Capsid protein" evidence="1">
    <location>
        <begin position="737"/>
        <end position="1017"/>
    </location>
</feature>
<feature type="domain" description="Peptidase C4" evidence="4">
    <location>
        <begin position="1"/>
        <end position="195"/>
    </location>
</feature>
<feature type="domain" description="RdRp catalytic" evidence="3">
    <location>
        <begin position="461"/>
        <end position="585"/>
    </location>
</feature>
<feature type="region of interest" description="Disordered" evidence="5">
    <location>
        <begin position="746"/>
        <end position="787"/>
    </location>
</feature>
<feature type="compositionally biased region" description="Basic and acidic residues" evidence="5">
    <location>
        <begin position="746"/>
        <end position="760"/>
    </location>
</feature>
<feature type="active site" description="For nuclear inclusion protein A activity" evidence="4">
    <location>
        <position position="57"/>
    </location>
</feature>
<feature type="active site" description="For nuclear inclusion protein A activity" evidence="4">
    <location>
        <position position="127"/>
    </location>
</feature>
<feature type="site" description="Cleavage; by NIa-pro" evidence="1">
    <location>
        <begin position="219"/>
        <end position="220"/>
    </location>
</feature>
<feature type="site" description="Cleavage; by NIa-pro" evidence="1">
    <location>
        <begin position="736"/>
        <end position="737"/>
    </location>
</feature>
<feature type="non-terminal residue">
    <location>
        <position position="1"/>
    </location>
</feature>